<evidence type="ECO:0000250" key="1">
    <source>
        <dbReference type="UniProtKB" id="G3X6E2"/>
    </source>
</evidence>
<evidence type="ECO:0000305" key="2"/>
<feature type="chain" id="PRO_0000342389" description="CIMIP2 protein GA14893">
    <location>
        <begin position="1"/>
        <end position="324"/>
    </location>
</feature>
<accession>Q28YX9</accession>
<reference key="1">
    <citation type="journal article" date="2005" name="Genome Res.">
        <title>Comparative genome sequencing of Drosophila pseudoobscura: chromosomal, gene, and cis-element evolution.</title>
        <authorList>
            <person name="Richards S."/>
            <person name="Liu Y."/>
            <person name="Bettencourt B.R."/>
            <person name="Hradecky P."/>
            <person name="Letovsky S."/>
            <person name="Nielsen R."/>
            <person name="Thornton K."/>
            <person name="Hubisz M.J."/>
            <person name="Chen R."/>
            <person name="Meisel R.P."/>
            <person name="Couronne O."/>
            <person name="Hua S."/>
            <person name="Smith M.A."/>
            <person name="Zhang P."/>
            <person name="Liu J."/>
            <person name="Bussemaker H.J."/>
            <person name="van Batenburg M.F."/>
            <person name="Howells S.L."/>
            <person name="Scherer S.E."/>
            <person name="Sodergren E."/>
            <person name="Matthews B.B."/>
            <person name="Crosby M.A."/>
            <person name="Schroeder A.J."/>
            <person name="Ortiz-Barrientos D."/>
            <person name="Rives C.M."/>
            <person name="Metzker M.L."/>
            <person name="Muzny D.M."/>
            <person name="Scott G."/>
            <person name="Steffen D."/>
            <person name="Wheeler D.A."/>
            <person name="Worley K.C."/>
            <person name="Havlak P."/>
            <person name="Durbin K.J."/>
            <person name="Egan A."/>
            <person name="Gill R."/>
            <person name="Hume J."/>
            <person name="Morgan M.B."/>
            <person name="Miner G."/>
            <person name="Hamilton C."/>
            <person name="Huang Y."/>
            <person name="Waldron L."/>
            <person name="Verduzco D."/>
            <person name="Clerc-Blankenburg K.P."/>
            <person name="Dubchak I."/>
            <person name="Noor M.A.F."/>
            <person name="Anderson W."/>
            <person name="White K.P."/>
            <person name="Clark A.G."/>
            <person name="Schaeffer S.W."/>
            <person name="Gelbart W.M."/>
            <person name="Weinstock G.M."/>
            <person name="Gibbs R.A."/>
        </authorList>
    </citation>
    <scope>NUCLEOTIDE SEQUENCE [LARGE SCALE GENOMIC DNA]</scope>
    <source>
        <strain>MV2-25 / Tucson 14011-0121.94</strain>
    </source>
</reference>
<comment type="function">
    <text evidence="1">Probable microtubule inner protein (MIP) part of the dynein-decorated doublet microtubules (DMTs) in cilium axoneme.</text>
</comment>
<comment type="subcellular location">
    <subcellularLocation>
        <location evidence="1">Cytoplasm</location>
        <location evidence="1">Cytoskeleton</location>
        <location evidence="1">Cilium axoneme</location>
    </subcellularLocation>
</comment>
<comment type="similarity">
    <text evidence="2">Belongs to the CIMIP2 family.</text>
</comment>
<dbReference type="EMBL" id="CM000071">
    <property type="protein sequence ID" value="EAL25836.2"/>
    <property type="molecule type" value="Genomic_DNA"/>
</dbReference>
<dbReference type="RefSeq" id="XP_015040177.1">
    <property type="nucleotide sequence ID" value="XM_015184691.1"/>
</dbReference>
<dbReference type="STRING" id="46245.Q28YX9"/>
<dbReference type="EnsemblMetazoa" id="FBtr0277875">
    <property type="protein sequence ID" value="FBpp0276313"/>
    <property type="gene ID" value="FBgn0074919"/>
</dbReference>
<dbReference type="EnsemblMetazoa" id="FBtr0369119">
    <property type="protein sequence ID" value="FBpp0331762"/>
    <property type="gene ID" value="FBgn0074919"/>
</dbReference>
<dbReference type="KEGG" id="dpo:4804746"/>
<dbReference type="eggNOG" id="ENOG502RTSD">
    <property type="taxonomic scope" value="Eukaryota"/>
</dbReference>
<dbReference type="HOGENOM" id="CLU_065650_1_0_1"/>
<dbReference type="InParanoid" id="Q28YX9"/>
<dbReference type="OMA" id="CCGQDLT"/>
<dbReference type="Proteomes" id="UP000001819">
    <property type="component" value="Chromosome 3"/>
</dbReference>
<dbReference type="Bgee" id="FBgn0074919">
    <property type="expression patterns" value="Expressed in male reproductive system and 1 other cell type or tissue"/>
</dbReference>
<dbReference type="GO" id="GO:0042995">
    <property type="term" value="C:cell projection"/>
    <property type="evidence" value="ECO:0007669"/>
    <property type="project" value="UniProtKB-KW"/>
</dbReference>
<dbReference type="GO" id="GO:0005737">
    <property type="term" value="C:cytoplasm"/>
    <property type="evidence" value="ECO:0007669"/>
    <property type="project" value="UniProtKB-KW"/>
</dbReference>
<dbReference type="GO" id="GO:0015630">
    <property type="term" value="C:microtubule cytoskeleton"/>
    <property type="evidence" value="ECO:0007669"/>
    <property type="project" value="UniProtKB-ARBA"/>
</dbReference>
<dbReference type="InterPro" id="IPR018902">
    <property type="entry name" value="CMI2A-C-like_dom"/>
</dbReference>
<dbReference type="PANTHER" id="PTHR22146">
    <property type="entry name" value="CAT EYE SYNDROME CRITICAL REGION PROTEIN 6"/>
    <property type="match status" value="1"/>
</dbReference>
<dbReference type="PANTHER" id="PTHR22146:SF8">
    <property type="entry name" value="PROTEIN FAM166B"/>
    <property type="match status" value="1"/>
</dbReference>
<dbReference type="Pfam" id="PF10629">
    <property type="entry name" value="CMI2B-like"/>
    <property type="match status" value="2"/>
</dbReference>
<organism>
    <name type="scientific">Drosophila pseudoobscura pseudoobscura</name>
    <name type="common">Fruit fly</name>
    <dbReference type="NCBI Taxonomy" id="46245"/>
    <lineage>
        <taxon>Eukaryota</taxon>
        <taxon>Metazoa</taxon>
        <taxon>Ecdysozoa</taxon>
        <taxon>Arthropoda</taxon>
        <taxon>Hexapoda</taxon>
        <taxon>Insecta</taxon>
        <taxon>Pterygota</taxon>
        <taxon>Neoptera</taxon>
        <taxon>Endopterygota</taxon>
        <taxon>Diptera</taxon>
        <taxon>Brachycera</taxon>
        <taxon>Muscomorpha</taxon>
        <taxon>Ephydroidea</taxon>
        <taxon>Drosophilidae</taxon>
        <taxon>Drosophila</taxon>
        <taxon>Sophophora</taxon>
    </lineage>
</organism>
<keyword id="KW-0966">Cell projection</keyword>
<keyword id="KW-0963">Cytoplasm</keyword>
<keyword id="KW-0206">Cytoskeleton</keyword>
<keyword id="KW-1185">Reference proteome</keyword>
<protein>
    <recommendedName>
        <fullName>CIMIP2 protein GA14893</fullName>
    </recommendedName>
</protein>
<proteinExistence type="inferred from homology"/>
<sequence length="324" mass="36997">MMNDTITPEPHLVPGYTGHCTENRDRVGKTYGKQTHKLLIDPCIYHAPELIVLPIHAKQGLKDYPTEHELKVLRRREDLVDAVYRHPILPGYAGFVPNMASQTGKRYVAAASAGVAQHETLMELYRCENRTLRHRDLLESGKGLFERKLNERLLPQARYRSPLIPVTGRSKGVKDEECPPRVDKLRYSKFTSPHFLEDDDDDKFIINGYAAHIPMAVTRFGESNQVLTHRALCSFSDYMYKRKRDAWCCGQDLTRPAVTCPPVGHFVIYHDDIGMVPSYAGHVPGELYKFGRTYGKTTINAKRWLDIHRGLTGLPEVSNLDYTY</sequence>
<gene>
    <name type="ORF">GA14893</name>
</gene>
<name>CMIP2_DROPS</name>